<keyword id="KW-0520">NAD</keyword>
<keyword id="KW-0560">Oxidoreductase</keyword>
<keyword id="KW-1185">Reference proteome</keyword>
<protein>
    <recommendedName>
        <fullName evidence="1">Mannitol-1-phosphate 5-dehydrogenase</fullName>
        <ecNumber evidence="1">1.1.1.17</ecNumber>
    </recommendedName>
</protein>
<evidence type="ECO:0000255" key="1">
    <source>
        <dbReference type="HAMAP-Rule" id="MF_00196"/>
    </source>
</evidence>
<reference key="1">
    <citation type="journal article" date="2007" name="J. Bacteriol.">
        <title>Genome sequence of Avery's virulent serotype 2 strain D39 of Streptococcus pneumoniae and comparison with that of unencapsulated laboratory strain R6.</title>
        <authorList>
            <person name="Lanie J.A."/>
            <person name="Ng W.-L."/>
            <person name="Kazmierczak K.M."/>
            <person name="Andrzejewski T.M."/>
            <person name="Davidsen T.M."/>
            <person name="Wayne K.J."/>
            <person name="Tettelin H."/>
            <person name="Glass J.I."/>
            <person name="Winkler M.E."/>
        </authorList>
    </citation>
    <scope>NUCLEOTIDE SEQUENCE [LARGE SCALE GENOMIC DNA]</scope>
    <source>
        <strain>D39 / NCTC 7466</strain>
    </source>
</reference>
<accession>Q04M75</accession>
<organism>
    <name type="scientific">Streptococcus pneumoniae serotype 2 (strain D39 / NCTC 7466)</name>
    <dbReference type="NCBI Taxonomy" id="373153"/>
    <lineage>
        <taxon>Bacteria</taxon>
        <taxon>Bacillati</taxon>
        <taxon>Bacillota</taxon>
        <taxon>Bacilli</taxon>
        <taxon>Lactobacillales</taxon>
        <taxon>Streptococcaceae</taxon>
        <taxon>Streptococcus</taxon>
    </lineage>
</organism>
<feature type="chain" id="PRO_1000011818" description="Mannitol-1-phosphate 5-dehydrogenase">
    <location>
        <begin position="1"/>
        <end position="378"/>
    </location>
</feature>
<feature type="binding site" evidence="1">
    <location>
        <begin position="4"/>
        <end position="15"/>
    </location>
    <ligand>
        <name>NAD(+)</name>
        <dbReference type="ChEBI" id="CHEBI:57540"/>
    </ligand>
</feature>
<name>MTLD_STRP2</name>
<dbReference type="EC" id="1.1.1.17" evidence="1"/>
<dbReference type="EMBL" id="CP000410">
    <property type="protein sequence ID" value="ABJ54824.1"/>
    <property type="molecule type" value="Genomic_DNA"/>
</dbReference>
<dbReference type="RefSeq" id="WP_000682974.1">
    <property type="nucleotide sequence ID" value="NZ_JAMLJR010000009.1"/>
</dbReference>
<dbReference type="SMR" id="Q04M75"/>
<dbReference type="PaxDb" id="373153-SPD_0363"/>
<dbReference type="KEGG" id="spd:SPD_0363"/>
<dbReference type="eggNOG" id="COG0246">
    <property type="taxonomic scope" value="Bacteria"/>
</dbReference>
<dbReference type="HOGENOM" id="CLU_036089_2_0_9"/>
<dbReference type="BioCyc" id="SPNE373153:G1G6V-399-MONOMER"/>
<dbReference type="Proteomes" id="UP000001452">
    <property type="component" value="Chromosome"/>
</dbReference>
<dbReference type="GO" id="GO:0005829">
    <property type="term" value="C:cytosol"/>
    <property type="evidence" value="ECO:0007669"/>
    <property type="project" value="TreeGrafter"/>
</dbReference>
<dbReference type="GO" id="GO:0008926">
    <property type="term" value="F:mannitol-1-phosphate 5-dehydrogenase activity"/>
    <property type="evidence" value="ECO:0007669"/>
    <property type="project" value="UniProtKB-UniRule"/>
</dbReference>
<dbReference type="GO" id="GO:0019592">
    <property type="term" value="P:mannitol catabolic process"/>
    <property type="evidence" value="ECO:0007669"/>
    <property type="project" value="TreeGrafter"/>
</dbReference>
<dbReference type="FunFam" id="1.10.1040.10:FF:000042">
    <property type="entry name" value="Mannitol-1-phosphate 5-dehydrogenase"/>
    <property type="match status" value="1"/>
</dbReference>
<dbReference type="FunFam" id="3.40.50.720:FF:000586">
    <property type="entry name" value="Mannitol-1-phosphate 5-dehydrogenase"/>
    <property type="match status" value="1"/>
</dbReference>
<dbReference type="Gene3D" id="1.10.1040.10">
    <property type="entry name" value="N-(1-d-carboxylethyl)-l-norvaline Dehydrogenase, domain 2"/>
    <property type="match status" value="1"/>
</dbReference>
<dbReference type="Gene3D" id="3.40.50.720">
    <property type="entry name" value="NAD(P)-binding Rossmann-like Domain"/>
    <property type="match status" value="1"/>
</dbReference>
<dbReference type="HAMAP" id="MF_00196">
    <property type="entry name" value="Mannitol_dehydrog"/>
    <property type="match status" value="1"/>
</dbReference>
<dbReference type="InterPro" id="IPR008927">
    <property type="entry name" value="6-PGluconate_DH-like_C_sf"/>
</dbReference>
<dbReference type="InterPro" id="IPR013328">
    <property type="entry name" value="6PGD_dom2"/>
</dbReference>
<dbReference type="InterPro" id="IPR023028">
    <property type="entry name" value="Mannitol_1_phos_5_DH"/>
</dbReference>
<dbReference type="InterPro" id="IPR000669">
    <property type="entry name" value="Mannitol_DH"/>
</dbReference>
<dbReference type="InterPro" id="IPR013118">
    <property type="entry name" value="Mannitol_DH_C"/>
</dbReference>
<dbReference type="InterPro" id="IPR023027">
    <property type="entry name" value="Mannitol_DH_CS"/>
</dbReference>
<dbReference type="InterPro" id="IPR013131">
    <property type="entry name" value="Mannitol_DH_N"/>
</dbReference>
<dbReference type="InterPro" id="IPR036291">
    <property type="entry name" value="NAD(P)-bd_dom_sf"/>
</dbReference>
<dbReference type="NCBIfam" id="NF002647">
    <property type="entry name" value="PRK02318.1-3"/>
    <property type="match status" value="1"/>
</dbReference>
<dbReference type="NCBIfam" id="NF002652">
    <property type="entry name" value="PRK02318.2-5"/>
    <property type="match status" value="1"/>
</dbReference>
<dbReference type="PANTHER" id="PTHR30524:SF0">
    <property type="entry name" value="ALTRONATE OXIDOREDUCTASE-RELATED"/>
    <property type="match status" value="1"/>
</dbReference>
<dbReference type="PANTHER" id="PTHR30524">
    <property type="entry name" value="MANNITOL-1-PHOSPHATE 5-DEHYDROGENASE"/>
    <property type="match status" value="1"/>
</dbReference>
<dbReference type="Pfam" id="PF01232">
    <property type="entry name" value="Mannitol_dh"/>
    <property type="match status" value="1"/>
</dbReference>
<dbReference type="Pfam" id="PF08125">
    <property type="entry name" value="Mannitol_dh_C"/>
    <property type="match status" value="1"/>
</dbReference>
<dbReference type="PRINTS" id="PR00084">
    <property type="entry name" value="MTLDHDRGNASE"/>
</dbReference>
<dbReference type="SUPFAM" id="SSF48179">
    <property type="entry name" value="6-phosphogluconate dehydrogenase C-terminal domain-like"/>
    <property type="match status" value="1"/>
</dbReference>
<dbReference type="SUPFAM" id="SSF51735">
    <property type="entry name" value="NAD(P)-binding Rossmann-fold domains"/>
    <property type="match status" value="1"/>
</dbReference>
<dbReference type="PROSITE" id="PS00974">
    <property type="entry name" value="MANNITOL_DHGENASE"/>
    <property type="match status" value="1"/>
</dbReference>
<comment type="catalytic activity">
    <reaction evidence="1">
        <text>D-mannitol 1-phosphate + NAD(+) = beta-D-fructose 6-phosphate + NADH + H(+)</text>
        <dbReference type="Rhea" id="RHEA:19661"/>
        <dbReference type="ChEBI" id="CHEBI:15378"/>
        <dbReference type="ChEBI" id="CHEBI:57540"/>
        <dbReference type="ChEBI" id="CHEBI:57634"/>
        <dbReference type="ChEBI" id="CHEBI:57945"/>
        <dbReference type="ChEBI" id="CHEBI:61381"/>
        <dbReference type="EC" id="1.1.1.17"/>
    </reaction>
</comment>
<comment type="similarity">
    <text evidence="1">Belongs to the mannitol dehydrogenase family.</text>
</comment>
<gene>
    <name evidence="1" type="primary">mtlD</name>
    <name type="ordered locus">SPD_0363</name>
</gene>
<sequence length="378" mass="42991">MKHSVHFGAGNIGRGFIGEILFKNGFHIDFVDVNNQIIHALNEKGKYEIEIAQKGQSRIEVTNVAGINSKEHPEQVIEAIQKTDIITTAIGPNILPFIAELLAKGIEARRVAGNTQVLDVMACENMIGGSQFLYQEVKKYLSPEGLTFADNYIGFPNAAVDRIVPAQSHEDSLFVVVEPFNEWVVETKRLKNPDLRLKDVHYEEDLEPFIERKLFSVNSGHATSAYIGAHYGAKTILEALQNPNIKSRIESVLAEIRSLLIAKWNFDKKELENYHKVIIERFENPFIVDEVSRVARTPIRKLGYNERFIRPIRELKELSLSYKNLLKTVGYAFDYRDVNDEESIRLGELLAKQLVKDVVIQVTGLDDQELIEQIVEYI</sequence>
<proteinExistence type="inferred from homology"/>